<name>YQK4_CAEEL</name>
<reference key="1">
    <citation type="journal article" date="1998" name="Science">
        <title>Genome sequence of the nematode C. elegans: a platform for investigating biology.</title>
        <authorList>
            <consortium name="The C. elegans sequencing consortium"/>
        </authorList>
    </citation>
    <scope>NUCLEOTIDE SEQUENCE [LARGE SCALE GENOMIC DNA]</scope>
    <source>
        <strain>Bristol N2</strain>
    </source>
</reference>
<reference key="2">
    <citation type="journal article" date="2007" name="Mol. Cell. Proteomics">
        <title>Proteomics reveals N-linked glycoprotein diversity in Caenorhabditis elegans and suggests an atypical translocation mechanism for integral membrane proteins.</title>
        <authorList>
            <person name="Kaji H."/>
            <person name="Kamiie J."/>
            <person name="Kawakami H."/>
            <person name="Kido K."/>
            <person name="Yamauchi Y."/>
            <person name="Shinkawa T."/>
            <person name="Taoka M."/>
            <person name="Takahashi N."/>
            <person name="Isobe T."/>
        </authorList>
    </citation>
    <scope>GLYCOSYLATION [LARGE SCALE ANALYSIS] AT ASN-115</scope>
    <scope>IDENTIFICATION BY MASS SPECTROMETRY</scope>
    <source>
        <strain>Bristol N2</strain>
    </source>
</reference>
<keyword id="KW-0325">Glycoprotein</keyword>
<keyword id="KW-1185">Reference proteome</keyword>
<keyword id="KW-0732">Signal</keyword>
<evidence type="ECO:0000255" key="1"/>
<evidence type="ECO:0000269" key="2">
    <source>
    </source>
</evidence>
<feature type="signal peptide" evidence="1">
    <location>
        <begin position="1"/>
        <end position="17"/>
    </location>
</feature>
<feature type="chain" id="PRO_0000014278" description="Uncharacterized protein C56G2.4">
    <location>
        <begin position="18"/>
        <end position="538"/>
    </location>
</feature>
<feature type="glycosylation site" description="N-linked (GlcNAc...) asparagine" evidence="2">
    <location>
        <position position="115"/>
    </location>
</feature>
<proteinExistence type="evidence at protein level"/>
<organism>
    <name type="scientific">Caenorhabditis elegans</name>
    <dbReference type="NCBI Taxonomy" id="6239"/>
    <lineage>
        <taxon>Eukaryota</taxon>
        <taxon>Metazoa</taxon>
        <taxon>Ecdysozoa</taxon>
        <taxon>Nematoda</taxon>
        <taxon>Chromadorea</taxon>
        <taxon>Rhabditida</taxon>
        <taxon>Rhabditina</taxon>
        <taxon>Rhabditomorpha</taxon>
        <taxon>Rhabditoidea</taxon>
        <taxon>Rhabditidae</taxon>
        <taxon>Peloderinae</taxon>
        <taxon>Caenorhabditis</taxon>
    </lineage>
</organism>
<protein>
    <recommendedName>
        <fullName>Uncharacterized protein C56G2.4</fullName>
    </recommendedName>
</protein>
<sequence length="538" mass="60994">MNLQILLLLLLFCHVAAVCRDTETCIERVKEVVAAPRRFWFGEQRSALCSNRNAKSLECGGPPQLASFHSIASRLFRVKTYHSAYLRNLYIFPRVTYRASPGHYRACEHDFFSGNTSAVQADPDMDPVEPFRIRKRPEITWSGLQYDEQYTVVITDVGYATINFLAVDFPKATKILKDYEPTENYRPSPNPMVVLVFRNGRADIESPKSEEDFNLPQFMLKHELEDDLVGLSLIVASSDPFAIEKQRLRGKVDYCHSLLQKRLASNPPRHHTILHRLPIDEIDSWLSVSFDQHQVNGNVCCQRIKLPKTSIFLDPLGDVSISALTTLTPPSISSMRISSSQSNYINYHRQTRNFVELSNEKFSLAIIDAHHGHLHWLEVDIPAANLNAANGNGLTKADYVPLIPKKPSTCHSYLFVLLAQPASMQTLESYCEGMCETRKKFRLELFKQQHGLRLSALSTVSSCYDLPYAYHILMKDASQNRTMERRGSKHRSSLYSDMSSEVCAAFHVSPHHKCPISQSSFTVSIIGAVFLVVLAHLF</sequence>
<accession>Q09288</accession>
<dbReference type="EMBL" id="FO080744">
    <property type="protein sequence ID" value="CCD66336.1"/>
    <property type="molecule type" value="Genomic_DNA"/>
</dbReference>
<dbReference type="PIR" id="T15866">
    <property type="entry name" value="T15866"/>
</dbReference>
<dbReference type="RefSeq" id="NP_498385.2">
    <property type="nucleotide sequence ID" value="NM_065984.5"/>
</dbReference>
<dbReference type="SMR" id="Q09288"/>
<dbReference type="FunCoup" id="Q09288">
    <property type="interactions" value="60"/>
</dbReference>
<dbReference type="STRING" id="6239.C56G2.4.1"/>
<dbReference type="iPTMnet" id="Q09288"/>
<dbReference type="PaxDb" id="6239-C56G2.4"/>
<dbReference type="PeptideAtlas" id="Q09288"/>
<dbReference type="EnsemblMetazoa" id="C56G2.4.1">
    <property type="protein sequence ID" value="C56G2.4.1"/>
    <property type="gene ID" value="WBGene00016979"/>
</dbReference>
<dbReference type="GeneID" id="175894"/>
<dbReference type="KEGG" id="cel:CELE_C56G2.4"/>
<dbReference type="UCSC" id="C56G2.4.1">
    <property type="organism name" value="c. elegans"/>
</dbReference>
<dbReference type="AGR" id="WB:WBGene00016979"/>
<dbReference type="CTD" id="175894"/>
<dbReference type="WormBase" id="C56G2.4">
    <property type="protein sequence ID" value="CE30638"/>
    <property type="gene ID" value="WBGene00016979"/>
</dbReference>
<dbReference type="eggNOG" id="ENOG502SE7I">
    <property type="taxonomic scope" value="Eukaryota"/>
</dbReference>
<dbReference type="HOGENOM" id="CLU_506457_0_0_1"/>
<dbReference type="InParanoid" id="Q09288"/>
<dbReference type="OMA" id="GHYRACE"/>
<dbReference type="OrthoDB" id="2506647at2759"/>
<dbReference type="PRO" id="PR:Q09288"/>
<dbReference type="Proteomes" id="UP000001940">
    <property type="component" value="Chromosome III"/>
</dbReference>
<dbReference type="Bgee" id="WBGene00016979">
    <property type="expression patterns" value="Expressed in pharyngeal muscle cell (C elegans) and 3 other cell types or tissues"/>
</dbReference>
<dbReference type="Gene3D" id="3.90.280.10">
    <property type="entry name" value="PEBP-like"/>
    <property type="match status" value="2"/>
</dbReference>
<dbReference type="InterPro" id="IPR036610">
    <property type="entry name" value="PEBP-like_sf"/>
</dbReference>
<dbReference type="SUPFAM" id="SSF49777">
    <property type="entry name" value="PEBP-like"/>
    <property type="match status" value="2"/>
</dbReference>
<gene>
    <name type="ORF">C56G2.4</name>
</gene>